<reference key="1">
    <citation type="journal article" date="2007" name="Proc. Natl. Acad. Sci. U.S.A.">
        <title>Genome sequencing and comparative analysis of Saccharomyces cerevisiae strain YJM789.</title>
        <authorList>
            <person name="Wei W."/>
            <person name="McCusker J.H."/>
            <person name="Hyman R.W."/>
            <person name="Jones T."/>
            <person name="Ning Y."/>
            <person name="Cao Z."/>
            <person name="Gu Z."/>
            <person name="Bruno D."/>
            <person name="Miranda M."/>
            <person name="Nguyen M."/>
            <person name="Wilhelmy J."/>
            <person name="Komp C."/>
            <person name="Tamse R."/>
            <person name="Wang X."/>
            <person name="Jia P."/>
            <person name="Luedi P."/>
            <person name="Oefner P.J."/>
            <person name="David L."/>
            <person name="Dietrich F.S."/>
            <person name="Li Y."/>
            <person name="Davis R.W."/>
            <person name="Steinmetz L.M."/>
        </authorList>
    </citation>
    <scope>NUCLEOTIDE SEQUENCE [LARGE SCALE GENOMIC DNA]</scope>
    <source>
        <strain>YJM789</strain>
    </source>
</reference>
<comment type="function">
    <text evidence="2">Required for the post-translational delivery of tail-anchored (TA) proteins to the endoplasmic reticulum. Together with GET1, acts as a membrane receptor for soluble GET3, which recognizes and selectively binds the transmembrane domain of TA proteins in the cytosol. The GET complex cooperates with the HDEL receptor ERD2 to mediate the ATP-dependent retrieval of resident ER proteins that contain a C-terminal H-D-E-L retention signal from the Golgi to the ER. Involved in DNA replication and DNA damage response and also in cell wall function.</text>
</comment>
<comment type="subunit">
    <text evidence="2">Component of the Golgi to ER traffic (GET) complex, which is composed of GET1, GET2 and GET3. Within the complex, GET1 and GET2 form a heterotetramer which is stabilized by phosphatidylinositol binding and which binds to the GET3 homodimer.</text>
</comment>
<comment type="subcellular location">
    <subcellularLocation>
        <location evidence="2">Endoplasmic reticulum membrane</location>
        <topology evidence="2">Multi-pass membrane protein</topology>
    </subcellularLocation>
    <subcellularLocation>
        <location evidence="2">Golgi apparatus membrane</location>
        <topology evidence="2">Multi-pass membrane protein</topology>
    </subcellularLocation>
</comment>
<comment type="similarity">
    <text evidence="2">Belongs to the GET2 family.</text>
</comment>
<keyword id="KW-0007">Acetylation</keyword>
<keyword id="KW-0256">Endoplasmic reticulum</keyword>
<keyword id="KW-0931">ER-Golgi transport</keyword>
<keyword id="KW-0325">Glycoprotein</keyword>
<keyword id="KW-0333">Golgi apparatus</keyword>
<keyword id="KW-0472">Membrane</keyword>
<keyword id="KW-0597">Phosphoprotein</keyword>
<keyword id="KW-0812">Transmembrane</keyword>
<keyword id="KW-1133">Transmembrane helix</keyword>
<keyword id="KW-0813">Transport</keyword>
<name>GET2_YEAS7</name>
<organism>
    <name type="scientific">Saccharomyces cerevisiae (strain YJM789)</name>
    <name type="common">Baker's yeast</name>
    <dbReference type="NCBI Taxonomy" id="307796"/>
    <lineage>
        <taxon>Eukaryota</taxon>
        <taxon>Fungi</taxon>
        <taxon>Dikarya</taxon>
        <taxon>Ascomycota</taxon>
        <taxon>Saccharomycotina</taxon>
        <taxon>Saccharomycetes</taxon>
        <taxon>Saccharomycetales</taxon>
        <taxon>Saccharomycetaceae</taxon>
        <taxon>Saccharomyces</taxon>
    </lineage>
</organism>
<accession>A6ZR39</accession>
<protein>
    <recommendedName>
        <fullName evidence="2">Golgi to ER traffic protein 2</fullName>
    </recommendedName>
    <alternativeName>
        <fullName evidence="2">Hydroxyurea resistance protein 2</fullName>
    </alternativeName>
    <alternativeName>
        <fullName evidence="2">Required for meiotic nuclear division protein 7</fullName>
    </alternativeName>
</protein>
<feature type="initiator methionine" description="Removed" evidence="1">
    <location>
        <position position="1"/>
    </location>
</feature>
<feature type="chain" id="PRO_0000388639" description="Golgi to ER traffic protein 2">
    <location>
        <begin position="2"/>
        <end position="285"/>
    </location>
</feature>
<feature type="topological domain" description="Cytoplasmic" evidence="2">
    <location>
        <begin position="2"/>
        <end position="148"/>
    </location>
</feature>
<feature type="transmembrane region" description="Helical" evidence="2">
    <location>
        <begin position="149"/>
        <end position="169"/>
    </location>
</feature>
<feature type="topological domain" description="Lumenal" evidence="2">
    <location>
        <begin position="170"/>
        <end position="196"/>
    </location>
</feature>
<feature type="transmembrane region" description="Helical" evidence="2">
    <location>
        <begin position="197"/>
        <end position="216"/>
    </location>
</feature>
<feature type="topological domain" description="Cytoplasmic" evidence="2">
    <location>
        <begin position="217"/>
        <end position="263"/>
    </location>
</feature>
<feature type="transmembrane region" description="Helical" evidence="2">
    <location>
        <begin position="264"/>
        <end position="284"/>
    </location>
</feature>
<feature type="topological domain" description="Lumenal" evidence="2">
    <location>
        <position position="285"/>
    </location>
</feature>
<feature type="region of interest" description="Disordered" evidence="3">
    <location>
        <begin position="1"/>
        <end position="71"/>
    </location>
</feature>
<feature type="compositionally biased region" description="Basic and acidic residues" evidence="3">
    <location>
        <begin position="1"/>
        <end position="10"/>
    </location>
</feature>
<feature type="compositionally biased region" description="Basic residues" evidence="3">
    <location>
        <begin position="11"/>
        <end position="20"/>
    </location>
</feature>
<feature type="compositionally biased region" description="Polar residues" evidence="3">
    <location>
        <begin position="24"/>
        <end position="42"/>
    </location>
</feature>
<feature type="compositionally biased region" description="Low complexity" evidence="3">
    <location>
        <begin position="49"/>
        <end position="60"/>
    </location>
</feature>
<feature type="modified residue" description="N-acetylserine" evidence="1">
    <location>
        <position position="2"/>
    </location>
</feature>
<feature type="modified residue" description="Phosphoserine" evidence="1">
    <location>
        <position position="45"/>
    </location>
</feature>
<feature type="glycosylation site" description="N-linked (GlcNAc...) asparagine" evidence="2">
    <location>
        <position position="173"/>
    </location>
</feature>
<feature type="glycosylation site" description="N-linked (GlcNAc...) asparagine" evidence="2">
    <location>
        <position position="196"/>
    </location>
</feature>
<dbReference type="EMBL" id="AAFW02000048">
    <property type="protein sequence ID" value="EDN63059.1"/>
    <property type="molecule type" value="Genomic_DNA"/>
</dbReference>
<dbReference type="SMR" id="A6ZR39"/>
<dbReference type="GlyCosmos" id="A6ZR39">
    <property type="glycosylation" value="2 sites, No reported glycans"/>
</dbReference>
<dbReference type="HOGENOM" id="CLU_066477_0_0_1"/>
<dbReference type="OrthoDB" id="6525at4893"/>
<dbReference type="Proteomes" id="UP000007060">
    <property type="component" value="Unassembled WGS sequence"/>
</dbReference>
<dbReference type="GO" id="GO:0005789">
    <property type="term" value="C:endoplasmic reticulum membrane"/>
    <property type="evidence" value="ECO:0007669"/>
    <property type="project" value="UniProtKB-SubCell"/>
</dbReference>
<dbReference type="GO" id="GO:0043529">
    <property type="term" value="C:GET complex"/>
    <property type="evidence" value="ECO:0007669"/>
    <property type="project" value="UniProtKB-UniRule"/>
</dbReference>
<dbReference type="GO" id="GO:0000139">
    <property type="term" value="C:Golgi membrane"/>
    <property type="evidence" value="ECO:0007669"/>
    <property type="project" value="UniProtKB-SubCell"/>
</dbReference>
<dbReference type="GO" id="GO:0045048">
    <property type="term" value="P:protein insertion into ER membrane"/>
    <property type="evidence" value="ECO:0007669"/>
    <property type="project" value="UniProtKB-UniRule"/>
</dbReference>
<dbReference type="GO" id="GO:0006890">
    <property type="term" value="P:retrograde vesicle-mediated transport, Golgi to endoplasmic reticulum"/>
    <property type="evidence" value="ECO:0007669"/>
    <property type="project" value="TreeGrafter"/>
</dbReference>
<dbReference type="HAMAP" id="MF_03114">
    <property type="entry name" value="Get2"/>
    <property type="match status" value="1"/>
</dbReference>
<dbReference type="InterPro" id="IPR014802">
    <property type="entry name" value="GET2"/>
</dbReference>
<dbReference type="InterPro" id="IPR028143">
    <property type="entry name" value="Get2/sif1"/>
</dbReference>
<dbReference type="PANTHER" id="PTHR28263">
    <property type="entry name" value="GOLGI TO ER TRAFFIC PROTEIN 2"/>
    <property type="match status" value="1"/>
</dbReference>
<dbReference type="PANTHER" id="PTHR28263:SF1">
    <property type="entry name" value="GOLGI TO ER TRAFFIC PROTEIN 2"/>
    <property type="match status" value="1"/>
</dbReference>
<dbReference type="Pfam" id="PF08690">
    <property type="entry name" value="GET2"/>
    <property type="match status" value="1"/>
</dbReference>
<sequence length="285" mass="31463">MSELTEAEKRRLLRERRQKKFSNGGASSRLNKITGQASSHLNAESPLDAPSAAKATPPASVHSATPDIKEDSNVAPQLDLLKQLAAMQGQGTGKSTPQDSSTPDLLSLLSSMNTGMPSAEGTPSFGQAAPAAPINQAALDYHDYLLNRLKAWTILVKWVFFLLPYLYLITRPNSSVWPAYAFTQSAWFAPLRNPSNFTRIFATFEFLSISIYYQLLKNVEHKSKIKNLQDTNKLVKLVSLVPEGVIPVANLKGKLITLLQYWDLLSMLITDISFVLIVLGLLTYL</sequence>
<evidence type="ECO:0000250" key="1">
    <source>
        <dbReference type="UniProtKB" id="P40056"/>
    </source>
</evidence>
<evidence type="ECO:0000255" key="2">
    <source>
        <dbReference type="HAMAP-Rule" id="MF_03114"/>
    </source>
</evidence>
<evidence type="ECO:0000256" key="3">
    <source>
        <dbReference type="SAM" id="MobiDB-lite"/>
    </source>
</evidence>
<proteinExistence type="inferred from homology"/>
<gene>
    <name evidence="2" type="primary">GET2</name>
    <name evidence="2" type="synonym">HUR2</name>
    <name evidence="2" type="synonym">RMD7</name>
    <name type="ORF">SCY_1586</name>
</gene>